<protein>
    <recommendedName>
        <fullName evidence="1">Ketol-acid reductoisomerase (NADP(+))</fullName>
        <shortName evidence="1">KARI</shortName>
        <ecNumber evidence="1">1.1.1.86</ecNumber>
    </recommendedName>
    <alternativeName>
        <fullName evidence="1">Acetohydroxy-acid isomeroreductase</fullName>
        <shortName evidence="1">AHIR</shortName>
    </alternativeName>
    <alternativeName>
        <fullName evidence="1">Alpha-keto-beta-hydroxylacyl reductoisomerase</fullName>
    </alternativeName>
    <alternativeName>
        <fullName evidence="1">Ketol-acid reductoisomerase type 1</fullName>
    </alternativeName>
    <alternativeName>
        <fullName evidence="1">Ketol-acid reductoisomerase type I</fullName>
    </alternativeName>
</protein>
<comment type="function">
    <text evidence="1">Involved in the biosynthesis of branched-chain amino acids (BCAA). Catalyzes an alkyl-migration followed by a ketol-acid reduction of (S)-2-acetolactate (S2AL) to yield (R)-2,3-dihydroxy-isovalerate. In the isomerase reaction, S2AL is rearranged via a Mg-dependent methyl migration to produce 3-hydroxy-3-methyl-2-ketobutyrate (HMKB). In the reductase reaction, this 2-ketoacid undergoes a metal-dependent reduction by NADPH to yield (R)-2,3-dihydroxy-isovalerate.</text>
</comment>
<comment type="catalytic activity">
    <reaction evidence="1">
        <text>(2R)-2,3-dihydroxy-3-methylbutanoate + NADP(+) = (2S)-2-acetolactate + NADPH + H(+)</text>
        <dbReference type="Rhea" id="RHEA:22068"/>
        <dbReference type="ChEBI" id="CHEBI:15378"/>
        <dbReference type="ChEBI" id="CHEBI:49072"/>
        <dbReference type="ChEBI" id="CHEBI:57783"/>
        <dbReference type="ChEBI" id="CHEBI:58349"/>
        <dbReference type="ChEBI" id="CHEBI:58476"/>
        <dbReference type="EC" id="1.1.1.86"/>
    </reaction>
</comment>
<comment type="catalytic activity">
    <reaction evidence="1">
        <text>(2R,3R)-2,3-dihydroxy-3-methylpentanoate + NADP(+) = (S)-2-ethyl-2-hydroxy-3-oxobutanoate + NADPH + H(+)</text>
        <dbReference type="Rhea" id="RHEA:13493"/>
        <dbReference type="ChEBI" id="CHEBI:15378"/>
        <dbReference type="ChEBI" id="CHEBI:49256"/>
        <dbReference type="ChEBI" id="CHEBI:49258"/>
        <dbReference type="ChEBI" id="CHEBI:57783"/>
        <dbReference type="ChEBI" id="CHEBI:58349"/>
        <dbReference type="EC" id="1.1.1.86"/>
    </reaction>
</comment>
<comment type="cofactor">
    <cofactor evidence="1">
        <name>Mg(2+)</name>
        <dbReference type="ChEBI" id="CHEBI:18420"/>
    </cofactor>
    <text evidence="1">Binds 2 magnesium ions per subunit.</text>
</comment>
<comment type="pathway">
    <text evidence="1">Amino-acid biosynthesis; L-isoleucine biosynthesis; L-isoleucine from 2-oxobutanoate: step 2/4.</text>
</comment>
<comment type="pathway">
    <text evidence="1">Amino-acid biosynthesis; L-valine biosynthesis; L-valine from pyruvate: step 2/4.</text>
</comment>
<comment type="similarity">
    <text evidence="1">Belongs to the ketol-acid reductoisomerase family.</text>
</comment>
<organism>
    <name type="scientific">Streptococcus pneumoniae serotype 2 (strain D39 / NCTC 7466)</name>
    <dbReference type="NCBI Taxonomy" id="373153"/>
    <lineage>
        <taxon>Bacteria</taxon>
        <taxon>Bacillati</taxon>
        <taxon>Bacillota</taxon>
        <taxon>Bacilli</taxon>
        <taxon>Lactobacillales</taxon>
        <taxon>Streptococcaceae</taxon>
        <taxon>Streptococcus</taxon>
    </lineage>
</organism>
<sequence>MTVQMEYEKDVKVAALDGKKIAVIGYGSQGHAHAQNLRDSGRDVIIGVRPGKSFDKAKEDGFDTYTVAEATKLADVIMILAPDEIQQELYEAEIAPNLEAGNAVGFAHGFNIHFEFIKVPADVDVFMCAPKGPGHLVRRTYEEGFGVPALYAVYQDATGNAKNIAMDWCKGVGAARVGLLETTYKEETEEDLFGEQAVLCGGLTALIEAGFEVLTEAGYAPELAYFEVLHEMKLIVDLIYEGGFKKMRQSISNTAEYGDYVSGPRVITEQVKENMKAVLADIQNGKFANDFVNDYKAGRPKLTAYREQAANLEIEKVGAELRKAMPFVGKNDDDAFKIYN</sequence>
<keyword id="KW-0002">3D-structure</keyword>
<keyword id="KW-0028">Amino-acid biosynthesis</keyword>
<keyword id="KW-0100">Branched-chain amino acid biosynthesis</keyword>
<keyword id="KW-0460">Magnesium</keyword>
<keyword id="KW-0479">Metal-binding</keyword>
<keyword id="KW-0521">NADP</keyword>
<keyword id="KW-0560">Oxidoreductase</keyword>
<keyword id="KW-1185">Reference proteome</keyword>
<accession>Q04M32</accession>
<dbReference type="EC" id="1.1.1.86" evidence="1"/>
<dbReference type="EMBL" id="CP000410">
    <property type="protein sequence ID" value="ABJ55451.1"/>
    <property type="molecule type" value="Genomic_DNA"/>
</dbReference>
<dbReference type="RefSeq" id="WP_000218054.1">
    <property type="nucleotide sequence ID" value="NZ_JAMLJR010000009.1"/>
</dbReference>
<dbReference type="PDB" id="6L2I">
    <property type="method" value="X-ray"/>
    <property type="resolution" value="1.69 A"/>
    <property type="chains" value="A/B=1-340"/>
</dbReference>
<dbReference type="PDB" id="6L2K">
    <property type="method" value="X-ray"/>
    <property type="resolution" value="1.95 A"/>
    <property type="chains" value="A/B=1-340"/>
</dbReference>
<dbReference type="PDB" id="6L2R">
    <property type="method" value="X-ray"/>
    <property type="resolution" value="2.02 A"/>
    <property type="chains" value="A/B=1-340"/>
</dbReference>
<dbReference type="PDB" id="6L2S">
    <property type="method" value="X-ray"/>
    <property type="resolution" value="2.29 A"/>
    <property type="chains" value="A/B=1-340"/>
</dbReference>
<dbReference type="PDB" id="6L2Z">
    <property type="method" value="X-ray"/>
    <property type="resolution" value="2.02 A"/>
    <property type="chains" value="A/B=1-340"/>
</dbReference>
<dbReference type="PDBsum" id="6L2I"/>
<dbReference type="PDBsum" id="6L2K"/>
<dbReference type="PDBsum" id="6L2R"/>
<dbReference type="PDBsum" id="6L2S"/>
<dbReference type="PDBsum" id="6L2Z"/>
<dbReference type="SMR" id="Q04M32"/>
<dbReference type="PaxDb" id="373153-SPD_0406"/>
<dbReference type="GeneID" id="45652102"/>
<dbReference type="KEGG" id="spd:SPD_0406"/>
<dbReference type="eggNOG" id="COG0059">
    <property type="taxonomic scope" value="Bacteria"/>
</dbReference>
<dbReference type="HOGENOM" id="CLU_033821_0_1_9"/>
<dbReference type="BioCyc" id="SPNE373153:G1G6V-445-MONOMER"/>
<dbReference type="UniPathway" id="UPA00047">
    <property type="reaction ID" value="UER00056"/>
</dbReference>
<dbReference type="UniPathway" id="UPA00049">
    <property type="reaction ID" value="UER00060"/>
</dbReference>
<dbReference type="PHI-base" id="PHI:11426"/>
<dbReference type="Proteomes" id="UP000001452">
    <property type="component" value="Chromosome"/>
</dbReference>
<dbReference type="GO" id="GO:0005829">
    <property type="term" value="C:cytosol"/>
    <property type="evidence" value="ECO:0007669"/>
    <property type="project" value="TreeGrafter"/>
</dbReference>
<dbReference type="GO" id="GO:0004455">
    <property type="term" value="F:ketol-acid reductoisomerase activity"/>
    <property type="evidence" value="ECO:0007669"/>
    <property type="project" value="UniProtKB-UniRule"/>
</dbReference>
<dbReference type="GO" id="GO:0000287">
    <property type="term" value="F:magnesium ion binding"/>
    <property type="evidence" value="ECO:0007669"/>
    <property type="project" value="UniProtKB-UniRule"/>
</dbReference>
<dbReference type="GO" id="GO:0050661">
    <property type="term" value="F:NADP binding"/>
    <property type="evidence" value="ECO:0007669"/>
    <property type="project" value="InterPro"/>
</dbReference>
<dbReference type="GO" id="GO:0009097">
    <property type="term" value="P:isoleucine biosynthetic process"/>
    <property type="evidence" value="ECO:0007669"/>
    <property type="project" value="UniProtKB-UniRule"/>
</dbReference>
<dbReference type="GO" id="GO:0009099">
    <property type="term" value="P:L-valine biosynthetic process"/>
    <property type="evidence" value="ECO:0007669"/>
    <property type="project" value="UniProtKB-UniRule"/>
</dbReference>
<dbReference type="FunFam" id="3.40.50.720:FF:000023">
    <property type="entry name" value="Ketol-acid reductoisomerase (NADP(+))"/>
    <property type="match status" value="1"/>
</dbReference>
<dbReference type="Gene3D" id="6.10.240.10">
    <property type="match status" value="1"/>
</dbReference>
<dbReference type="Gene3D" id="3.40.50.720">
    <property type="entry name" value="NAD(P)-binding Rossmann-like Domain"/>
    <property type="match status" value="1"/>
</dbReference>
<dbReference type="HAMAP" id="MF_00435">
    <property type="entry name" value="IlvC"/>
    <property type="match status" value="1"/>
</dbReference>
<dbReference type="InterPro" id="IPR008927">
    <property type="entry name" value="6-PGluconate_DH-like_C_sf"/>
</dbReference>
<dbReference type="InterPro" id="IPR013023">
    <property type="entry name" value="KARI"/>
</dbReference>
<dbReference type="InterPro" id="IPR000506">
    <property type="entry name" value="KARI_C"/>
</dbReference>
<dbReference type="InterPro" id="IPR013116">
    <property type="entry name" value="KARI_N"/>
</dbReference>
<dbReference type="InterPro" id="IPR014359">
    <property type="entry name" value="KARI_prok"/>
</dbReference>
<dbReference type="InterPro" id="IPR036291">
    <property type="entry name" value="NAD(P)-bd_dom_sf"/>
</dbReference>
<dbReference type="NCBIfam" id="TIGR00465">
    <property type="entry name" value="ilvC"/>
    <property type="match status" value="1"/>
</dbReference>
<dbReference type="NCBIfam" id="NF004017">
    <property type="entry name" value="PRK05479.1"/>
    <property type="match status" value="1"/>
</dbReference>
<dbReference type="NCBIfam" id="NF009940">
    <property type="entry name" value="PRK13403.1"/>
    <property type="match status" value="1"/>
</dbReference>
<dbReference type="PANTHER" id="PTHR21371">
    <property type="entry name" value="KETOL-ACID REDUCTOISOMERASE, MITOCHONDRIAL"/>
    <property type="match status" value="1"/>
</dbReference>
<dbReference type="PANTHER" id="PTHR21371:SF1">
    <property type="entry name" value="KETOL-ACID REDUCTOISOMERASE, MITOCHONDRIAL"/>
    <property type="match status" value="1"/>
</dbReference>
<dbReference type="Pfam" id="PF01450">
    <property type="entry name" value="KARI_C"/>
    <property type="match status" value="1"/>
</dbReference>
<dbReference type="Pfam" id="PF07991">
    <property type="entry name" value="KARI_N"/>
    <property type="match status" value="1"/>
</dbReference>
<dbReference type="PIRSF" id="PIRSF000116">
    <property type="entry name" value="IlvC_gammaproteo"/>
    <property type="match status" value="1"/>
</dbReference>
<dbReference type="SUPFAM" id="SSF48179">
    <property type="entry name" value="6-phosphogluconate dehydrogenase C-terminal domain-like"/>
    <property type="match status" value="1"/>
</dbReference>
<dbReference type="SUPFAM" id="SSF51735">
    <property type="entry name" value="NAD(P)-binding Rossmann-fold domains"/>
    <property type="match status" value="1"/>
</dbReference>
<dbReference type="PROSITE" id="PS51851">
    <property type="entry name" value="KARI_C"/>
    <property type="match status" value="1"/>
</dbReference>
<dbReference type="PROSITE" id="PS51850">
    <property type="entry name" value="KARI_N"/>
    <property type="match status" value="1"/>
</dbReference>
<gene>
    <name evidence="1" type="primary">ilvC</name>
    <name type="ordered locus">SPD_0406</name>
</gene>
<evidence type="ECO:0000255" key="1">
    <source>
        <dbReference type="HAMAP-Rule" id="MF_00435"/>
    </source>
</evidence>
<evidence type="ECO:0000255" key="2">
    <source>
        <dbReference type="PROSITE-ProRule" id="PRU01197"/>
    </source>
</evidence>
<evidence type="ECO:0000255" key="3">
    <source>
        <dbReference type="PROSITE-ProRule" id="PRU01198"/>
    </source>
</evidence>
<evidence type="ECO:0007829" key="4">
    <source>
        <dbReference type="PDB" id="6L2I"/>
    </source>
</evidence>
<feature type="chain" id="PRO_1000050578" description="Ketol-acid reductoisomerase (NADP(+))">
    <location>
        <begin position="1"/>
        <end position="340"/>
    </location>
</feature>
<feature type="domain" description="KARI N-terminal Rossmann" evidence="2">
    <location>
        <begin position="3"/>
        <end position="182"/>
    </location>
</feature>
<feature type="domain" description="KARI C-terminal knotted" evidence="3">
    <location>
        <begin position="183"/>
        <end position="328"/>
    </location>
</feature>
<feature type="active site" evidence="1">
    <location>
        <position position="108"/>
    </location>
</feature>
<feature type="binding site" evidence="1">
    <location>
        <begin position="26"/>
        <end position="29"/>
    </location>
    <ligand>
        <name>NADP(+)</name>
        <dbReference type="ChEBI" id="CHEBI:58349"/>
    </ligand>
</feature>
<feature type="binding site" evidence="1">
    <location>
        <position position="49"/>
    </location>
    <ligand>
        <name>NADP(+)</name>
        <dbReference type="ChEBI" id="CHEBI:58349"/>
    </ligand>
</feature>
<feature type="binding site" evidence="1">
    <location>
        <position position="53"/>
    </location>
    <ligand>
        <name>NADP(+)</name>
        <dbReference type="ChEBI" id="CHEBI:58349"/>
    </ligand>
</feature>
<feature type="binding site" evidence="1">
    <location>
        <begin position="83"/>
        <end position="86"/>
    </location>
    <ligand>
        <name>NADP(+)</name>
        <dbReference type="ChEBI" id="CHEBI:58349"/>
    </ligand>
</feature>
<feature type="binding site" evidence="1">
    <location>
        <position position="134"/>
    </location>
    <ligand>
        <name>NADP(+)</name>
        <dbReference type="ChEBI" id="CHEBI:58349"/>
    </ligand>
</feature>
<feature type="binding site" evidence="1">
    <location>
        <position position="191"/>
    </location>
    <ligand>
        <name>Mg(2+)</name>
        <dbReference type="ChEBI" id="CHEBI:18420"/>
        <label>1</label>
    </ligand>
</feature>
<feature type="binding site" evidence="1">
    <location>
        <position position="191"/>
    </location>
    <ligand>
        <name>Mg(2+)</name>
        <dbReference type="ChEBI" id="CHEBI:18420"/>
        <label>2</label>
    </ligand>
</feature>
<feature type="binding site" evidence="1">
    <location>
        <position position="195"/>
    </location>
    <ligand>
        <name>Mg(2+)</name>
        <dbReference type="ChEBI" id="CHEBI:18420"/>
        <label>1</label>
    </ligand>
</feature>
<feature type="binding site" evidence="1">
    <location>
        <position position="227"/>
    </location>
    <ligand>
        <name>Mg(2+)</name>
        <dbReference type="ChEBI" id="CHEBI:18420"/>
        <label>2</label>
    </ligand>
</feature>
<feature type="binding site" evidence="1">
    <location>
        <position position="231"/>
    </location>
    <ligand>
        <name>Mg(2+)</name>
        <dbReference type="ChEBI" id="CHEBI:18420"/>
        <label>2</label>
    </ligand>
</feature>
<feature type="binding site" evidence="1">
    <location>
        <position position="252"/>
    </location>
    <ligand>
        <name>substrate</name>
    </ligand>
</feature>
<feature type="helix" evidence="4">
    <location>
        <begin position="8"/>
        <end position="10"/>
    </location>
</feature>
<feature type="turn" evidence="4">
    <location>
        <begin position="15"/>
        <end position="18"/>
    </location>
</feature>
<feature type="strand" evidence="4">
    <location>
        <begin position="21"/>
        <end position="24"/>
    </location>
</feature>
<feature type="helix" evidence="4">
    <location>
        <begin position="28"/>
        <end position="39"/>
    </location>
</feature>
<feature type="strand" evidence="4">
    <location>
        <begin position="44"/>
        <end position="47"/>
    </location>
</feature>
<feature type="helix" evidence="4">
    <location>
        <begin position="52"/>
        <end position="59"/>
    </location>
</feature>
<feature type="helix" evidence="4">
    <location>
        <begin position="67"/>
        <end position="73"/>
    </location>
</feature>
<feature type="strand" evidence="4">
    <location>
        <begin position="75"/>
        <end position="79"/>
    </location>
</feature>
<feature type="helix" evidence="4">
    <location>
        <begin position="83"/>
        <end position="93"/>
    </location>
</feature>
<feature type="helix" evidence="4">
    <location>
        <begin position="95"/>
        <end position="97"/>
    </location>
</feature>
<feature type="strand" evidence="4">
    <location>
        <begin position="103"/>
        <end position="108"/>
    </location>
</feature>
<feature type="helix" evidence="4">
    <location>
        <begin position="110"/>
        <end position="113"/>
    </location>
</feature>
<feature type="strand" evidence="4">
    <location>
        <begin position="123"/>
        <end position="132"/>
    </location>
</feature>
<feature type="helix" evidence="4">
    <location>
        <begin position="134"/>
        <end position="142"/>
    </location>
</feature>
<feature type="strand" evidence="4">
    <location>
        <begin position="149"/>
        <end position="155"/>
    </location>
</feature>
<feature type="strand" evidence="4">
    <location>
        <begin position="157"/>
        <end position="159"/>
    </location>
</feature>
<feature type="helix" evidence="4">
    <location>
        <begin position="161"/>
        <end position="171"/>
    </location>
</feature>
<feature type="helix" evidence="4">
    <location>
        <begin position="174"/>
        <end position="176"/>
    </location>
</feature>
<feature type="strand" evidence="4">
    <location>
        <begin position="179"/>
        <end position="181"/>
    </location>
</feature>
<feature type="helix" evidence="4">
    <location>
        <begin position="184"/>
        <end position="197"/>
    </location>
</feature>
<feature type="turn" evidence="4">
    <location>
        <begin position="198"/>
        <end position="200"/>
    </location>
</feature>
<feature type="helix" evidence="4">
    <location>
        <begin position="201"/>
        <end position="216"/>
    </location>
</feature>
<feature type="helix" evidence="4">
    <location>
        <begin position="221"/>
        <end position="228"/>
    </location>
</feature>
<feature type="turn" evidence="4">
    <location>
        <begin position="229"/>
        <end position="231"/>
    </location>
</feature>
<feature type="helix" evidence="4">
    <location>
        <begin position="232"/>
        <end position="250"/>
    </location>
</feature>
<feature type="helix" evidence="4">
    <location>
        <begin position="253"/>
        <end position="266"/>
    </location>
</feature>
<feature type="helix" evidence="4">
    <location>
        <begin position="269"/>
        <end position="283"/>
    </location>
</feature>
<feature type="helix" evidence="4">
    <location>
        <begin position="286"/>
        <end position="296"/>
    </location>
</feature>
<feature type="helix" evidence="4">
    <location>
        <begin position="300"/>
        <end position="310"/>
    </location>
</feature>
<feature type="helix" evidence="4">
    <location>
        <begin position="313"/>
        <end position="324"/>
    </location>
</feature>
<proteinExistence type="evidence at protein level"/>
<name>ILVC_STRP2</name>
<reference key="1">
    <citation type="journal article" date="2007" name="J. Bacteriol.">
        <title>Genome sequence of Avery's virulent serotype 2 strain D39 of Streptococcus pneumoniae and comparison with that of unencapsulated laboratory strain R6.</title>
        <authorList>
            <person name="Lanie J.A."/>
            <person name="Ng W.-L."/>
            <person name="Kazmierczak K.M."/>
            <person name="Andrzejewski T.M."/>
            <person name="Davidsen T.M."/>
            <person name="Wayne K.J."/>
            <person name="Tettelin H."/>
            <person name="Glass J.I."/>
            <person name="Winkler M.E."/>
        </authorList>
    </citation>
    <scope>NUCLEOTIDE SEQUENCE [LARGE SCALE GENOMIC DNA]</scope>
    <source>
        <strain>D39 / NCTC 7466</strain>
    </source>
</reference>